<feature type="chain" id="PRO_0000077700" description="Protein ren">
    <location>
        <begin position="1"/>
        <end position="96"/>
    </location>
</feature>
<keyword id="KW-1185">Reference proteome</keyword>
<dbReference type="EMBL" id="J02459">
    <property type="protein sequence ID" value="AAA96586.1"/>
    <property type="molecule type" value="Genomic_DNA"/>
</dbReference>
<dbReference type="PIR" id="F43010">
    <property type="entry name" value="ZRBPL"/>
</dbReference>
<dbReference type="RefSeq" id="NP_040633.1">
    <property type="nucleotide sequence ID" value="NC_001416.1"/>
</dbReference>
<dbReference type="SMR" id="P03761"/>
<dbReference type="IntAct" id="P03761">
    <property type="interactions" value="5"/>
</dbReference>
<dbReference type="GeneID" id="2703496"/>
<dbReference type="KEGG" id="vg:2703496"/>
<dbReference type="Proteomes" id="UP000001711">
    <property type="component" value="Genome"/>
</dbReference>
<name>VREN_LAMBD</name>
<reference key="1">
    <citation type="journal article" date="1982" name="J. Mol. Biol.">
        <title>Nucleotide sequence of bacteriophage lambda DNA.</title>
        <authorList>
            <person name="Sanger F."/>
            <person name="Coulson A.R."/>
            <person name="Hong G.F."/>
            <person name="Hill D.F."/>
            <person name="Petersen G.B."/>
        </authorList>
    </citation>
    <scope>NUCLEOTIDE SEQUENCE [LARGE SCALE GENOMIC DNA]</scope>
</reference>
<sequence>MTGKEAIIHYLGTHNSFCAPDVAALTGATVTSINQAAAKMARAGLLVIEGKVWRTVYYRFATREEREGKMSTNLVFKECRQSAAMKRVLAVYGVKR</sequence>
<accession>P03761</accession>
<protein>
    <recommendedName>
        <fullName>Protein ren</fullName>
    </recommendedName>
</protein>
<gene>
    <name type="primary">ren</name>
</gene>
<proteinExistence type="predicted"/>
<organismHost>
    <name type="scientific">Escherichia coli</name>
    <dbReference type="NCBI Taxonomy" id="562"/>
</organismHost>
<organism>
    <name type="scientific">Escherichia phage lambda</name>
    <name type="common">Bacteriophage lambda</name>
    <dbReference type="NCBI Taxonomy" id="2681611"/>
    <lineage>
        <taxon>Viruses</taxon>
        <taxon>Duplodnaviria</taxon>
        <taxon>Heunggongvirae</taxon>
        <taxon>Uroviricota</taxon>
        <taxon>Caudoviricetes</taxon>
        <taxon>Lambdavirus</taxon>
        <taxon>Lambdavirus lambda</taxon>
    </lineage>
</organism>